<dbReference type="Proteomes" id="UP000694905">
    <property type="component" value="Unplaced"/>
</dbReference>
<dbReference type="GO" id="GO:0005576">
    <property type="term" value="C:extracellular region"/>
    <property type="evidence" value="ECO:0007669"/>
    <property type="project" value="UniProtKB-SubCell"/>
</dbReference>
<dbReference type="GO" id="GO:0007218">
    <property type="term" value="P:neuropeptide signaling pathway"/>
    <property type="evidence" value="ECO:0007669"/>
    <property type="project" value="UniProtKB-KW"/>
</dbReference>
<keyword id="KW-0027">Amidation</keyword>
<keyword id="KW-0903">Direct protein sequencing</keyword>
<keyword id="KW-0527">Neuropeptide</keyword>
<keyword id="KW-1185">Reference proteome</keyword>
<keyword id="KW-0964">Secreted</keyword>
<reference evidence="3" key="1">
    <citation type="journal article" date="2003" name="Peptides">
        <title>Mass spectrometric analysis of putative capa-gene products in Musca domestica and Neobellieria bullata.</title>
        <authorList>
            <person name="Predel R."/>
            <person name="Russell W.K."/>
            <person name="Tichy S.E."/>
            <person name="Russell D.H."/>
            <person name="Nachman R.J."/>
        </authorList>
    </citation>
    <scope>PROTEIN SEQUENCE</scope>
    <scope>TISSUE SPECIFICITY</scope>
    <scope>MASS SPECTROMETRY</scope>
    <scope>AMIDATION AT VAL-9</scope>
    <source>
        <tissue evidence="1">Ganglion</tissue>
    </source>
</reference>
<organism>
    <name type="scientific">Musca domestica</name>
    <name type="common">House fly</name>
    <dbReference type="NCBI Taxonomy" id="7370"/>
    <lineage>
        <taxon>Eukaryota</taxon>
        <taxon>Metazoa</taxon>
        <taxon>Ecdysozoa</taxon>
        <taxon>Arthropoda</taxon>
        <taxon>Hexapoda</taxon>
        <taxon>Insecta</taxon>
        <taxon>Pterygota</taxon>
        <taxon>Neoptera</taxon>
        <taxon>Endopterygota</taxon>
        <taxon>Diptera</taxon>
        <taxon>Brachycera</taxon>
        <taxon>Muscomorpha</taxon>
        <taxon>Muscoidea</taxon>
        <taxon>Muscidae</taxon>
        <taxon>Musca</taxon>
    </lineage>
</organism>
<sequence>ASLFNAPRV</sequence>
<evidence type="ECO:0000269" key="1">
    <source>
    </source>
</evidence>
<evidence type="ECO:0000303" key="2">
    <source>
    </source>
</evidence>
<evidence type="ECO:0000305" key="3"/>
<comment type="function">
    <text evidence="3">Mediates visceral muscle contractile activity (myotropic activity).</text>
</comment>
<comment type="subcellular location">
    <subcellularLocation>
        <location evidence="3">Secreted</location>
    </subcellularLocation>
</comment>
<comment type="tissue specificity">
    <text evidence="1">Dorsal ganglionic sheath of fused ventral nerve cord.</text>
</comment>
<comment type="mass spectrometry"/>
<comment type="similarity">
    <text evidence="2">Belongs to the periviscerokinin family.</text>
</comment>
<accession>P84355</accession>
<feature type="peptide" id="PRO_0000044264" description="Periviscerokinin-2">
    <location>
        <begin position="1"/>
        <end position="9"/>
    </location>
</feature>
<feature type="modified residue" description="Valine amide" evidence="1">
    <location>
        <position position="9"/>
    </location>
</feature>
<feature type="unsure residue" description="L or I" evidence="1">
    <location>
        <position position="3"/>
    </location>
</feature>
<proteinExistence type="evidence at protein level"/>
<protein>
    <recommendedName>
        <fullName>Periviscerokinin-2</fullName>
    </recommendedName>
    <alternativeName>
        <fullName>Musdo-PVK-2</fullName>
    </alternativeName>
</protein>
<name>PVK2_MUSDO</name>